<sequence>MGIKFLEVIKPFCAVLPEIQKPERKIQFREKVLWTAITLFIFLVCCQIPLFGIMSSDSADPFYWMRVILASNRGTLMELGISPIVTSGLIMQLLAGAKIIGVGDTPKDRALFNGAQKLFGMIITIGQAIVYVMTGMYGDPSEMGAGICLLIIIQLFVAGLIVLLLDELLQKGYGLGSGISLFIATNICETIVWKAFSPTTVNTGRGTEFEGAIIALFHLLATRTDKVRALREGFYRQNLPNLMNLIATVFVFAVVIYFQGFRVDLPIKSARYRGQYNTYPIKLFYTSNIPIILQSALVSNLYVISQMLSTRFSGNFLVNLLGTWSDATSGGPARAYPVAGLCYYLSPPESFGSVLDDPVHAGIYIVFMLGSCAFFSKTWIEVSGSSAKDVAKQLKEQQMVMRGHRETSMVHELNRYIPTAAAFGGLCIGGLSVMADFLGAIGSGTGILLAVTIIYQYFEIFVKEQSEVGSMGALLF</sequence>
<accession>Q8AY34</accession>
<proteinExistence type="evidence at transcript level"/>
<name>SC61A_HEMAM</name>
<protein>
    <recommendedName>
        <fullName>Protein transport protein Sec61 subunit alpha</fullName>
    </recommendedName>
</protein>
<dbReference type="EMBL" id="AY103473">
    <property type="protein sequence ID" value="AAM52489.1"/>
    <property type="molecule type" value="mRNA"/>
</dbReference>
<dbReference type="SMR" id="Q8AY34"/>
<dbReference type="GO" id="GO:0005789">
    <property type="term" value="C:endoplasmic reticulum membrane"/>
    <property type="evidence" value="ECO:0000250"/>
    <property type="project" value="UniProtKB"/>
</dbReference>
<dbReference type="GO" id="GO:0039019">
    <property type="term" value="P:pronephric nephron development"/>
    <property type="evidence" value="ECO:0000250"/>
    <property type="project" value="UniProtKB"/>
</dbReference>
<dbReference type="GO" id="GO:0045047">
    <property type="term" value="P:protein targeting to ER"/>
    <property type="evidence" value="ECO:0000250"/>
    <property type="project" value="UniProtKB"/>
</dbReference>
<dbReference type="GO" id="GO:0015031">
    <property type="term" value="P:protein transport"/>
    <property type="evidence" value="ECO:0007669"/>
    <property type="project" value="UniProtKB-KW"/>
</dbReference>
<dbReference type="FunFam" id="1.10.3370.10:FF:000002">
    <property type="entry name" value="Transport Sec61 subunit alpha isoform 2"/>
    <property type="match status" value="1"/>
</dbReference>
<dbReference type="Gene3D" id="1.10.3370.10">
    <property type="entry name" value="SecY subunit domain"/>
    <property type="match status" value="1"/>
</dbReference>
<dbReference type="InterPro" id="IPR002208">
    <property type="entry name" value="SecY/SEC61-alpha"/>
</dbReference>
<dbReference type="InterPro" id="IPR030659">
    <property type="entry name" value="SecY_CS"/>
</dbReference>
<dbReference type="InterPro" id="IPR023201">
    <property type="entry name" value="SecY_dom_sf"/>
</dbReference>
<dbReference type="InterPro" id="IPR019561">
    <property type="entry name" value="Translocon_Sec61/SecY_plug_dom"/>
</dbReference>
<dbReference type="NCBIfam" id="TIGR00967">
    <property type="entry name" value="3a0501s007"/>
    <property type="match status" value="1"/>
</dbReference>
<dbReference type="NCBIfam" id="NF006341">
    <property type="entry name" value="PRK08568.1-5"/>
    <property type="match status" value="1"/>
</dbReference>
<dbReference type="PANTHER" id="PTHR10906">
    <property type="entry name" value="SECY/SEC61-ALPHA FAMILY MEMBER"/>
    <property type="match status" value="1"/>
</dbReference>
<dbReference type="Pfam" id="PF10559">
    <property type="entry name" value="Plug_translocon"/>
    <property type="match status" value="1"/>
</dbReference>
<dbReference type="Pfam" id="PF00344">
    <property type="entry name" value="SecY"/>
    <property type="match status" value="1"/>
</dbReference>
<dbReference type="PIRSF" id="PIRSF004557">
    <property type="entry name" value="SecY"/>
    <property type="match status" value="1"/>
</dbReference>
<dbReference type="SUPFAM" id="SSF103491">
    <property type="entry name" value="Preprotein translocase SecY subunit"/>
    <property type="match status" value="1"/>
</dbReference>
<dbReference type="PROSITE" id="PS00755">
    <property type="entry name" value="SECY_1"/>
    <property type="match status" value="1"/>
</dbReference>
<dbReference type="PROSITE" id="PS00756">
    <property type="entry name" value="SECY_2"/>
    <property type="match status" value="1"/>
</dbReference>
<evidence type="ECO:0000250" key="1"/>
<evidence type="ECO:0000250" key="2">
    <source>
        <dbReference type="UniProtKB" id="P38377"/>
    </source>
</evidence>
<evidence type="ECO:0000250" key="3">
    <source>
        <dbReference type="UniProtKB" id="P61619"/>
    </source>
</evidence>
<evidence type="ECO:0000255" key="4"/>
<evidence type="ECO:0000305" key="5"/>
<gene>
    <name type="primary">sec61a</name>
</gene>
<keyword id="KW-0217">Developmental protein</keyword>
<keyword id="KW-0256">Endoplasmic reticulum</keyword>
<keyword id="KW-0472">Membrane</keyword>
<keyword id="KW-0653">Protein transport</keyword>
<keyword id="KW-0811">Translocation</keyword>
<keyword id="KW-0812">Transmembrane</keyword>
<keyword id="KW-1133">Transmembrane helix</keyword>
<keyword id="KW-0813">Transport</keyword>
<organism>
    <name type="scientific">Hemitripterus americanus</name>
    <name type="common">Sea raven</name>
    <dbReference type="NCBI Taxonomy" id="8094"/>
    <lineage>
        <taxon>Eukaryota</taxon>
        <taxon>Metazoa</taxon>
        <taxon>Chordata</taxon>
        <taxon>Craniata</taxon>
        <taxon>Vertebrata</taxon>
        <taxon>Euteleostomi</taxon>
        <taxon>Actinopterygii</taxon>
        <taxon>Neopterygii</taxon>
        <taxon>Teleostei</taxon>
        <taxon>Neoteleostei</taxon>
        <taxon>Acanthomorphata</taxon>
        <taxon>Eupercaria</taxon>
        <taxon>Perciformes</taxon>
        <taxon>Cottioidei</taxon>
        <taxon>Cottales</taxon>
        <taxon>Agonidae</taxon>
        <taxon>Hemitripterinae</taxon>
        <taxon>Hemitripterus</taxon>
    </lineage>
</organism>
<reference key="1">
    <citation type="journal article" date="2003" name="J. Cell Sci.">
        <title>Protein translocation across the endoplasmic reticulum membrane in cold-adapted organisms.</title>
        <authorList>
            <person name="Romisch K."/>
            <person name="Collie N."/>
            <person name="Soto N."/>
            <person name="Logue J."/>
            <person name="Lindsay M."/>
            <person name="Scheper W."/>
            <person name="Cheng C.-H.C."/>
        </authorList>
    </citation>
    <scope>NUCLEOTIDE SEQUENCE [MRNA]</scope>
    <source>
        <tissue>Liver</tissue>
    </source>
</reference>
<feature type="initiator methionine" description="Removed" evidence="1">
    <location>
        <position position="1"/>
    </location>
</feature>
<feature type="chain" id="PRO_0000131804" description="Protein transport protein Sec61 subunit alpha">
    <location>
        <begin position="2"/>
        <end position="476"/>
    </location>
</feature>
<feature type="topological domain" description="Cytoplasmic" evidence="4">
    <location>
        <begin position="2"/>
        <end position="33"/>
    </location>
</feature>
<feature type="transmembrane region" description="Helical" evidence="4">
    <location>
        <begin position="34"/>
        <end position="53"/>
    </location>
</feature>
<feature type="topological domain" description="Lumenal" evidence="4">
    <location>
        <begin position="54"/>
        <end position="76"/>
    </location>
</feature>
<feature type="transmembrane region" description="Helical" evidence="4">
    <location>
        <begin position="77"/>
        <end position="96"/>
    </location>
</feature>
<feature type="topological domain" description="Cytoplasmic" evidence="4">
    <location>
        <begin position="97"/>
        <end position="117"/>
    </location>
</feature>
<feature type="transmembrane region" description="Helical" evidence="4">
    <location>
        <begin position="118"/>
        <end position="138"/>
    </location>
</feature>
<feature type="topological domain" description="Lumenal" evidence="4">
    <location>
        <begin position="139"/>
        <end position="144"/>
    </location>
</feature>
<feature type="transmembrane region" description="Helical" evidence="4">
    <location>
        <begin position="145"/>
        <end position="165"/>
    </location>
</feature>
<feature type="topological domain" description="Cytoplasmic" evidence="4">
    <location>
        <begin position="166"/>
        <end position="172"/>
    </location>
</feature>
<feature type="transmembrane region" description="Helical" evidence="4">
    <location>
        <begin position="173"/>
        <end position="193"/>
    </location>
</feature>
<feature type="topological domain" description="Lumenal" evidence="4">
    <location>
        <begin position="194"/>
        <end position="240"/>
    </location>
</feature>
<feature type="transmembrane region" description="Helical" evidence="4">
    <location>
        <begin position="241"/>
        <end position="261"/>
    </location>
</feature>
<feature type="topological domain" description="Cytoplasmic" evidence="4">
    <location>
        <begin position="262"/>
        <end position="288"/>
    </location>
</feature>
<feature type="transmembrane region" description="Helical" evidence="4">
    <location>
        <begin position="289"/>
        <end position="309"/>
    </location>
</feature>
<feature type="topological domain" description="Lumenal" evidence="4">
    <location>
        <begin position="310"/>
        <end position="354"/>
    </location>
</feature>
<feature type="transmembrane region" description="Helical" evidence="4">
    <location>
        <begin position="355"/>
        <end position="375"/>
    </location>
</feature>
<feature type="topological domain" description="Cytoplasmic" evidence="4">
    <location>
        <begin position="376"/>
        <end position="420"/>
    </location>
</feature>
<feature type="transmembrane region" description="Helical" evidence="4">
    <location>
        <begin position="421"/>
        <end position="441"/>
    </location>
</feature>
<feature type="topological domain" description="Lumenal" evidence="4">
    <location>
        <begin position="442"/>
        <end position="445"/>
    </location>
</feature>
<feature type="transmembrane region" description="Helical" evidence="4">
    <location>
        <begin position="446"/>
        <end position="462"/>
    </location>
</feature>
<feature type="topological domain" description="Cytoplasmic" evidence="4">
    <location>
        <begin position="463"/>
        <end position="476"/>
    </location>
</feature>
<comment type="function">
    <text evidence="3">Component of SEC61 channel-forming translocon complex that mediates transport of signal peptide-containing precursor polypeptides across the endoplasmic reticulum (ER). Forms a ribosome receptor and a gated pore in the ER membrane, both functions required for cotranslational translocation of nascent polypeptides. May cooperate with auxiliary protein SEC62, SEC63 and HSPA5/BiP to enable post-translational transport of small presecretory proteins. The SEC61 channel is also involved in ER membrane insertion of transmembrane proteins: it mediates membrane insertion of the first few transmembrane segments of proteins, while insertion of subsequent transmembrane regions of multi-pass membrane proteins is mediated by the multi-pass translocon (MPT) complex.</text>
</comment>
<comment type="subunit">
    <text evidence="2 3">The SEC61 channel-forming translocon complex consists of channel-forming core components SEC61A1, SEC61B and SEC61G and different auxiliary components such as SEC62 and SEC63 (By similarity). The SEC61 channel associates with the multi-pass translocon (MPT) complex (By similarity).</text>
</comment>
<comment type="subcellular location">
    <subcellularLocation>
        <location evidence="3">Endoplasmic reticulum membrane</location>
        <topology evidence="3">Multi-pass membrane protein</topology>
    </subcellularLocation>
</comment>
<comment type="similarity">
    <text evidence="5">Belongs to the SecY/SEC61-alpha family.</text>
</comment>